<feature type="chain" id="PRO_0000348747" description="tRNA-cytidine(32) 2-sulfurtransferase">
    <location>
        <begin position="1"/>
        <end position="316"/>
    </location>
</feature>
<feature type="short sequence motif" description="PP-loop motif" evidence="1">
    <location>
        <begin position="52"/>
        <end position="57"/>
    </location>
</feature>
<feature type="binding site" evidence="1">
    <location>
        <position position="127"/>
    </location>
    <ligand>
        <name>[4Fe-4S] cluster</name>
        <dbReference type="ChEBI" id="CHEBI:49883"/>
    </ligand>
</feature>
<feature type="binding site" evidence="1">
    <location>
        <position position="130"/>
    </location>
    <ligand>
        <name>[4Fe-4S] cluster</name>
        <dbReference type="ChEBI" id="CHEBI:49883"/>
    </ligand>
</feature>
<feature type="binding site" evidence="1">
    <location>
        <position position="218"/>
    </location>
    <ligand>
        <name>[4Fe-4S] cluster</name>
        <dbReference type="ChEBI" id="CHEBI:49883"/>
    </ligand>
</feature>
<dbReference type="EC" id="2.8.1.-" evidence="1"/>
<dbReference type="EMBL" id="AE017143">
    <property type="protein sequence ID" value="AAP96476.1"/>
    <property type="status" value="ALT_INIT"/>
    <property type="molecule type" value="Genomic_DNA"/>
</dbReference>
<dbReference type="RefSeq" id="WP_041603549.1">
    <property type="nucleotide sequence ID" value="NC_002940.2"/>
</dbReference>
<dbReference type="SMR" id="Q7VKY7"/>
<dbReference type="STRING" id="233412.HD_1716"/>
<dbReference type="KEGG" id="hdu:HD_1716"/>
<dbReference type="eggNOG" id="COG0037">
    <property type="taxonomic scope" value="Bacteria"/>
</dbReference>
<dbReference type="HOGENOM" id="CLU_026481_0_0_6"/>
<dbReference type="OrthoDB" id="9801054at2"/>
<dbReference type="Proteomes" id="UP000001022">
    <property type="component" value="Chromosome"/>
</dbReference>
<dbReference type="GO" id="GO:0005737">
    <property type="term" value="C:cytoplasm"/>
    <property type="evidence" value="ECO:0007669"/>
    <property type="project" value="UniProtKB-SubCell"/>
</dbReference>
<dbReference type="GO" id="GO:0051539">
    <property type="term" value="F:4 iron, 4 sulfur cluster binding"/>
    <property type="evidence" value="ECO:0007669"/>
    <property type="project" value="UniProtKB-UniRule"/>
</dbReference>
<dbReference type="GO" id="GO:0005524">
    <property type="term" value="F:ATP binding"/>
    <property type="evidence" value="ECO:0007669"/>
    <property type="project" value="UniProtKB-UniRule"/>
</dbReference>
<dbReference type="GO" id="GO:0000287">
    <property type="term" value="F:magnesium ion binding"/>
    <property type="evidence" value="ECO:0007669"/>
    <property type="project" value="UniProtKB-UniRule"/>
</dbReference>
<dbReference type="GO" id="GO:0016783">
    <property type="term" value="F:sulfurtransferase activity"/>
    <property type="evidence" value="ECO:0007669"/>
    <property type="project" value="UniProtKB-UniRule"/>
</dbReference>
<dbReference type="GO" id="GO:0000049">
    <property type="term" value="F:tRNA binding"/>
    <property type="evidence" value="ECO:0007669"/>
    <property type="project" value="UniProtKB-KW"/>
</dbReference>
<dbReference type="GO" id="GO:0034227">
    <property type="term" value="P:tRNA thio-modification"/>
    <property type="evidence" value="ECO:0007669"/>
    <property type="project" value="UniProtKB-UniRule"/>
</dbReference>
<dbReference type="CDD" id="cd24138">
    <property type="entry name" value="TtcA-like"/>
    <property type="match status" value="1"/>
</dbReference>
<dbReference type="Gene3D" id="3.40.50.620">
    <property type="entry name" value="HUPs"/>
    <property type="match status" value="1"/>
</dbReference>
<dbReference type="HAMAP" id="MF_01850">
    <property type="entry name" value="TtcA"/>
    <property type="match status" value="1"/>
</dbReference>
<dbReference type="InterPro" id="IPR014729">
    <property type="entry name" value="Rossmann-like_a/b/a_fold"/>
</dbReference>
<dbReference type="InterPro" id="IPR011063">
    <property type="entry name" value="TilS/TtcA_N"/>
</dbReference>
<dbReference type="InterPro" id="IPR012089">
    <property type="entry name" value="tRNA_Cyd_32_2_STrfase"/>
</dbReference>
<dbReference type="InterPro" id="IPR035107">
    <property type="entry name" value="tRNA_thiolation_TtcA_Ctu1"/>
</dbReference>
<dbReference type="NCBIfam" id="NF007972">
    <property type="entry name" value="PRK10696.1"/>
    <property type="match status" value="1"/>
</dbReference>
<dbReference type="PANTHER" id="PTHR43686:SF1">
    <property type="entry name" value="AMINOTRAN_5 DOMAIN-CONTAINING PROTEIN"/>
    <property type="match status" value="1"/>
</dbReference>
<dbReference type="PANTHER" id="PTHR43686">
    <property type="entry name" value="SULFURTRANSFERASE-RELATED"/>
    <property type="match status" value="1"/>
</dbReference>
<dbReference type="Pfam" id="PF01171">
    <property type="entry name" value="ATP_bind_3"/>
    <property type="match status" value="1"/>
</dbReference>
<dbReference type="PIRSF" id="PIRSF004976">
    <property type="entry name" value="ATPase_YdaO"/>
    <property type="match status" value="1"/>
</dbReference>
<dbReference type="SUPFAM" id="SSF52402">
    <property type="entry name" value="Adenine nucleotide alpha hydrolases-like"/>
    <property type="match status" value="1"/>
</dbReference>
<organism>
    <name type="scientific">Haemophilus ducreyi (strain 35000HP / ATCC 700724)</name>
    <dbReference type="NCBI Taxonomy" id="233412"/>
    <lineage>
        <taxon>Bacteria</taxon>
        <taxon>Pseudomonadati</taxon>
        <taxon>Pseudomonadota</taxon>
        <taxon>Gammaproteobacteria</taxon>
        <taxon>Pasteurellales</taxon>
        <taxon>Pasteurellaceae</taxon>
        <taxon>Haemophilus</taxon>
    </lineage>
</organism>
<accession>Q7VKY7</accession>
<reference key="1">
    <citation type="submission" date="2003-06" db="EMBL/GenBank/DDBJ databases">
        <title>The complete genome sequence of Haemophilus ducreyi.</title>
        <authorList>
            <person name="Munson R.S. Jr."/>
            <person name="Ray W.C."/>
            <person name="Mahairas G."/>
            <person name="Sabo P."/>
            <person name="Mungur R."/>
            <person name="Johnson L."/>
            <person name="Nguyen D."/>
            <person name="Wang J."/>
            <person name="Forst C."/>
            <person name="Hood L."/>
        </authorList>
    </citation>
    <scope>NUCLEOTIDE SEQUENCE [LARGE SCALE GENOMIC DNA]</scope>
    <source>
        <strain>35000HP / ATCC 700724</strain>
    </source>
</reference>
<comment type="function">
    <text evidence="1">Catalyzes the ATP-dependent 2-thiolation of cytidine in position 32 of tRNA, to form 2-thiocytidine (s(2)C32). The sulfur atoms are provided by the cysteine/cysteine desulfurase (IscS) system.</text>
</comment>
<comment type="catalytic activity">
    <reaction evidence="1">
        <text>cytidine(32) in tRNA + S-sulfanyl-L-cysteinyl-[cysteine desulfurase] + AH2 + ATP = 2-thiocytidine(32) in tRNA + L-cysteinyl-[cysteine desulfurase] + A + AMP + diphosphate + H(+)</text>
        <dbReference type="Rhea" id="RHEA:57048"/>
        <dbReference type="Rhea" id="RHEA-COMP:10288"/>
        <dbReference type="Rhea" id="RHEA-COMP:12157"/>
        <dbReference type="Rhea" id="RHEA-COMP:12158"/>
        <dbReference type="Rhea" id="RHEA-COMP:14821"/>
        <dbReference type="ChEBI" id="CHEBI:13193"/>
        <dbReference type="ChEBI" id="CHEBI:15378"/>
        <dbReference type="ChEBI" id="CHEBI:17499"/>
        <dbReference type="ChEBI" id="CHEBI:29950"/>
        <dbReference type="ChEBI" id="CHEBI:30616"/>
        <dbReference type="ChEBI" id="CHEBI:33019"/>
        <dbReference type="ChEBI" id="CHEBI:61963"/>
        <dbReference type="ChEBI" id="CHEBI:82748"/>
        <dbReference type="ChEBI" id="CHEBI:141453"/>
        <dbReference type="ChEBI" id="CHEBI:456215"/>
    </reaction>
    <physiologicalReaction direction="left-to-right" evidence="1">
        <dbReference type="Rhea" id="RHEA:57049"/>
    </physiologicalReaction>
</comment>
<comment type="cofactor">
    <cofactor evidence="1">
        <name>Mg(2+)</name>
        <dbReference type="ChEBI" id="CHEBI:18420"/>
    </cofactor>
</comment>
<comment type="cofactor">
    <cofactor evidence="1">
        <name>[4Fe-4S] cluster</name>
        <dbReference type="ChEBI" id="CHEBI:49883"/>
    </cofactor>
    <text evidence="1">Binds 1 [4Fe-4S] cluster per subunit. The cluster is chelated by three Cys residues, the fourth Fe has a free coordination site that may bind a sulfur atom transferred from the persulfide of IscS.</text>
</comment>
<comment type="pathway">
    <text evidence="1">tRNA modification.</text>
</comment>
<comment type="subunit">
    <text evidence="1">Homodimer.</text>
</comment>
<comment type="subcellular location">
    <subcellularLocation>
        <location evidence="1">Cytoplasm</location>
    </subcellularLocation>
</comment>
<comment type="miscellaneous">
    <text evidence="1">The thiolation reaction likely consists of two steps: a first activation step by ATP to form an adenylated intermediate of the target base of tRNA, and a second nucleophilic substitution step of the sulfur (S) atom supplied by the hydrosulfide attached to the Fe-S cluster.</text>
</comment>
<comment type="similarity">
    <text evidence="1">Belongs to the TtcA family.</text>
</comment>
<comment type="sequence caution" evidence="2">
    <conflict type="erroneous initiation">
        <sequence resource="EMBL-CDS" id="AAP96476"/>
    </conflict>
    <text>Extended N-terminus.</text>
</comment>
<protein>
    <recommendedName>
        <fullName evidence="1">tRNA-cytidine(32) 2-sulfurtransferase</fullName>
        <ecNumber evidence="1">2.8.1.-</ecNumber>
    </recommendedName>
    <alternativeName>
        <fullName evidence="1">Two-thiocytidine biosynthesis protein A</fullName>
    </alternativeName>
    <alternativeName>
        <fullName evidence="1">tRNA 2-thiocytidine biosynthesis protein TtcA</fullName>
    </alternativeName>
</protein>
<name>TTCA_HAEDU</name>
<gene>
    <name evidence="1" type="primary">ttcA</name>
    <name type="ordered locus">HD_1716</name>
</gene>
<proteinExistence type="inferred from homology"/>
<keyword id="KW-0004">4Fe-4S</keyword>
<keyword id="KW-0067">ATP-binding</keyword>
<keyword id="KW-0963">Cytoplasm</keyword>
<keyword id="KW-0408">Iron</keyword>
<keyword id="KW-0411">Iron-sulfur</keyword>
<keyword id="KW-0460">Magnesium</keyword>
<keyword id="KW-0479">Metal-binding</keyword>
<keyword id="KW-0547">Nucleotide-binding</keyword>
<keyword id="KW-1185">Reference proteome</keyword>
<keyword id="KW-0694">RNA-binding</keyword>
<keyword id="KW-0808">Transferase</keyword>
<keyword id="KW-0819">tRNA processing</keyword>
<keyword id="KW-0820">tRNA-binding</keyword>
<evidence type="ECO:0000255" key="1">
    <source>
        <dbReference type="HAMAP-Rule" id="MF_01850"/>
    </source>
</evidence>
<evidence type="ECO:0000305" key="2"/>
<sequence length="316" mass="35949">MNQNTQPTNNLKDKKITYNFNKLQKRLRRNVGNAIANFNMIEAGDKVMVCLSGGKDSYTLLDILLNLKLSAPINFDIVAVNLDQKQPGFPEHILPEYLASIGVEYKIVQENTYGIVKEKIPEGKTTCSLCSRLRRGILYRTATELGATKIALGHHRDDMLETLFLNMFYNGKLKSMPPKLISDDAKHIVIRPLAYCKEKDIEKYAEAKQFPIIPCNLCGSQPNLQRQVVKEMLQNWDRQYPGRIETMFSALQNVTPSHLCDTQLFNFKAVKHGEMINGIEGDIAFDKMDIPMTLNIQEEDEKQAYTQNGTIQFKAV</sequence>